<gene>
    <name type="primary">sec24</name>
    <name type="ORF">ACLA_086070</name>
</gene>
<sequence>MAAPQGGYPPQEGYGQPGDYGSPTQQQPGVVAGAAHQGHAGGKKKRAYAGEAFGFGSGANAALGGQPPAGGSYGVYPPQPQAAGYQQPVYGADPHQMNAAAPGYATPASPGVAQMTQQFGAMGMTDPHLMPPQPQQAAVTPQAPRPVPLNQLYPTDLLTQPFNVAELDYPPPPIVLPPGTSVYPSPQANCPPTYVRSTLNAVPTTHSLLKKSKLPFALVIQPYAALHDAEDPIQVIPDQVISRCRRCRSYINPFVTFMDHGHRWRCNMCNLTNDVPQAFDWDSALQKPADRSLRPDLNHAVVEFVAPQEYMVRPPQPLVYLFLIDVSYASVTNGLLATSARCIKESLDRIPNADRRTRLGFIAVDSSLHYFSIPRDGSENSDPRMLVVSDLEEPFLPIPGDLLVTLSECRENIETFLDKLQEMFQNTQNNGCAMGSALRAGYKLISPVGGKMTVLSSSLPNIGHGALTMREDKKVLGTSKESSLLQTANSFYKSFAVECSKAQVSVDMFLFSSQYQDVASLSNLPRYTGGQTYFYPGWNAARPEDAIKFAREFSEYLSSEIGLEAVLRVRATTGLRMNTFYGNFFNRSSDLCAFPAFPRDQAYVVEVAIDETVTKPVVCLQTAVLHTTCNGERRIRVLTLALPTTQNLADVYASADQQAIATYFSHKAVERALSSGLEPAREALQAKAVELLSTYRKELAGGSVSGGGLQFPANLRGLPVLFLALIKNLGLRKSAQIPTDMRSAALCLLSTLPLPLLMQYIYPKMYSLHDMPDNAGLPDEQTGEIVLPPPVNLSSERIVPYGLYLIDDGQTQFLWVGRDAVPQLLLDVFGLADRTQLRVGKQNLPELDNDFNQRVRAVIEKSRDHRSKGVGSIVVPHLYVVKEDGEPGLRLWAQTMLVEDRADQSVSLVQWMGSLREKV</sequence>
<evidence type="ECO:0000250" key="1"/>
<evidence type="ECO:0000256" key="2">
    <source>
        <dbReference type="SAM" id="MobiDB-lite"/>
    </source>
</evidence>
<evidence type="ECO:0000305" key="3"/>
<accession>A1CUC3</accession>
<proteinExistence type="inferred from homology"/>
<keyword id="KW-0963">Cytoplasm</keyword>
<keyword id="KW-0968">Cytoplasmic vesicle</keyword>
<keyword id="KW-0256">Endoplasmic reticulum</keyword>
<keyword id="KW-0931">ER-Golgi transport</keyword>
<keyword id="KW-0333">Golgi apparatus</keyword>
<keyword id="KW-0472">Membrane</keyword>
<keyword id="KW-0479">Metal-binding</keyword>
<keyword id="KW-0653">Protein transport</keyword>
<keyword id="KW-1185">Reference proteome</keyword>
<keyword id="KW-0813">Transport</keyword>
<keyword id="KW-0862">Zinc</keyword>
<dbReference type="EMBL" id="DS027060">
    <property type="protein sequence ID" value="EAW06910.1"/>
    <property type="molecule type" value="Genomic_DNA"/>
</dbReference>
<dbReference type="RefSeq" id="XP_001268336.1">
    <property type="nucleotide sequence ID" value="XM_001268335.1"/>
</dbReference>
<dbReference type="SMR" id="A1CUC3"/>
<dbReference type="STRING" id="344612.A1CUC3"/>
<dbReference type="EnsemblFungi" id="EAW06910">
    <property type="protein sequence ID" value="EAW06910"/>
    <property type="gene ID" value="ACLA_086070"/>
</dbReference>
<dbReference type="GeneID" id="4700388"/>
<dbReference type="KEGG" id="act:ACLA_086070"/>
<dbReference type="VEuPathDB" id="FungiDB:ACLA_086070"/>
<dbReference type="eggNOG" id="KOG1985">
    <property type="taxonomic scope" value="Eukaryota"/>
</dbReference>
<dbReference type="HOGENOM" id="CLU_004589_2_1_1"/>
<dbReference type="OMA" id="AVECSKQ"/>
<dbReference type="OrthoDB" id="49016at2759"/>
<dbReference type="Proteomes" id="UP000006701">
    <property type="component" value="Unassembled WGS sequence"/>
</dbReference>
<dbReference type="GO" id="GO:0005801">
    <property type="term" value="C:cis-Golgi network"/>
    <property type="evidence" value="ECO:0007669"/>
    <property type="project" value="EnsemblFungi"/>
</dbReference>
<dbReference type="GO" id="GO:0030127">
    <property type="term" value="C:COPII vesicle coat"/>
    <property type="evidence" value="ECO:0007669"/>
    <property type="project" value="InterPro"/>
</dbReference>
<dbReference type="GO" id="GO:0070971">
    <property type="term" value="C:endoplasmic reticulum exit site"/>
    <property type="evidence" value="ECO:0007669"/>
    <property type="project" value="EnsemblFungi"/>
</dbReference>
<dbReference type="GO" id="GO:0005789">
    <property type="term" value="C:endoplasmic reticulum membrane"/>
    <property type="evidence" value="ECO:0007669"/>
    <property type="project" value="UniProtKB-SubCell"/>
</dbReference>
<dbReference type="GO" id="GO:1990753">
    <property type="term" value="C:equatorial cell cortex"/>
    <property type="evidence" value="ECO:0007669"/>
    <property type="project" value="EnsemblFungi"/>
</dbReference>
<dbReference type="GO" id="GO:0000139">
    <property type="term" value="C:Golgi membrane"/>
    <property type="evidence" value="ECO:0007669"/>
    <property type="project" value="UniProtKB-SubCell"/>
</dbReference>
<dbReference type="GO" id="GO:0000149">
    <property type="term" value="F:SNARE binding"/>
    <property type="evidence" value="ECO:0007669"/>
    <property type="project" value="TreeGrafter"/>
</dbReference>
<dbReference type="GO" id="GO:0008270">
    <property type="term" value="F:zinc ion binding"/>
    <property type="evidence" value="ECO:0007669"/>
    <property type="project" value="InterPro"/>
</dbReference>
<dbReference type="GO" id="GO:0090110">
    <property type="term" value="P:COPII-coated vesicle cargo loading"/>
    <property type="evidence" value="ECO:0007669"/>
    <property type="project" value="TreeGrafter"/>
</dbReference>
<dbReference type="GO" id="GO:0006886">
    <property type="term" value="P:intracellular protein transport"/>
    <property type="evidence" value="ECO:0007669"/>
    <property type="project" value="InterPro"/>
</dbReference>
<dbReference type="CDD" id="cd01479">
    <property type="entry name" value="Sec24-like"/>
    <property type="match status" value="1"/>
</dbReference>
<dbReference type="Gene3D" id="2.60.40.1670">
    <property type="entry name" value="beta-sandwich domain of Sec23/24"/>
    <property type="match status" value="1"/>
</dbReference>
<dbReference type="Gene3D" id="1.20.120.730">
    <property type="entry name" value="Sec23/Sec24 helical domain"/>
    <property type="match status" value="1"/>
</dbReference>
<dbReference type="Gene3D" id="3.40.20.10">
    <property type="entry name" value="Severin"/>
    <property type="match status" value="1"/>
</dbReference>
<dbReference type="Gene3D" id="3.40.50.410">
    <property type="entry name" value="von Willebrand factor, type A domain"/>
    <property type="match status" value="1"/>
</dbReference>
<dbReference type="Gene3D" id="2.30.30.380">
    <property type="entry name" value="Zn-finger domain of Sec23/24"/>
    <property type="match status" value="1"/>
</dbReference>
<dbReference type="InterPro" id="IPR029006">
    <property type="entry name" value="ADF-H/Gelsolin-like_dom_sf"/>
</dbReference>
<dbReference type="InterPro" id="IPR007123">
    <property type="entry name" value="Gelsolin-like_dom"/>
</dbReference>
<dbReference type="InterPro" id="IPR036180">
    <property type="entry name" value="Gelsolin-like_dom_sf"/>
</dbReference>
<dbReference type="InterPro" id="IPR006900">
    <property type="entry name" value="Sec23/24_helical_dom"/>
</dbReference>
<dbReference type="InterPro" id="IPR036175">
    <property type="entry name" value="Sec23/24_helical_dom_sf"/>
</dbReference>
<dbReference type="InterPro" id="IPR006896">
    <property type="entry name" value="Sec23/24_trunk_dom"/>
</dbReference>
<dbReference type="InterPro" id="IPR012990">
    <property type="entry name" value="Sec23_24_beta_S"/>
</dbReference>
<dbReference type="InterPro" id="IPR050550">
    <property type="entry name" value="SEC23_SEC24_subfamily"/>
</dbReference>
<dbReference type="InterPro" id="IPR041742">
    <property type="entry name" value="Sec24-like_trunk_dom"/>
</dbReference>
<dbReference type="InterPro" id="IPR036465">
    <property type="entry name" value="vWFA_dom_sf"/>
</dbReference>
<dbReference type="InterPro" id="IPR006895">
    <property type="entry name" value="Znf_Sec23_Sec24"/>
</dbReference>
<dbReference type="InterPro" id="IPR036174">
    <property type="entry name" value="Znf_Sec23_Sec24_sf"/>
</dbReference>
<dbReference type="PANTHER" id="PTHR13803">
    <property type="entry name" value="SEC24-RELATED PROTEIN"/>
    <property type="match status" value="1"/>
</dbReference>
<dbReference type="PANTHER" id="PTHR13803:SF39">
    <property type="entry name" value="SECRETORY 24AB, ISOFORM A"/>
    <property type="match status" value="1"/>
</dbReference>
<dbReference type="Pfam" id="PF00626">
    <property type="entry name" value="Gelsolin"/>
    <property type="match status" value="1"/>
</dbReference>
<dbReference type="Pfam" id="PF08033">
    <property type="entry name" value="Sec23_BS"/>
    <property type="match status" value="1"/>
</dbReference>
<dbReference type="Pfam" id="PF04815">
    <property type="entry name" value="Sec23_helical"/>
    <property type="match status" value="1"/>
</dbReference>
<dbReference type="Pfam" id="PF04811">
    <property type="entry name" value="Sec23_trunk"/>
    <property type="match status" value="1"/>
</dbReference>
<dbReference type="Pfam" id="PF04810">
    <property type="entry name" value="zf-Sec23_Sec24"/>
    <property type="match status" value="1"/>
</dbReference>
<dbReference type="SUPFAM" id="SSF81995">
    <property type="entry name" value="beta-sandwich domain of Sec23/24"/>
    <property type="match status" value="1"/>
</dbReference>
<dbReference type="SUPFAM" id="SSF82754">
    <property type="entry name" value="C-terminal, gelsolin-like domain of Sec23/24"/>
    <property type="match status" value="1"/>
</dbReference>
<dbReference type="SUPFAM" id="SSF81811">
    <property type="entry name" value="Helical domain of Sec23/24"/>
    <property type="match status" value="1"/>
</dbReference>
<dbReference type="SUPFAM" id="SSF53300">
    <property type="entry name" value="vWA-like"/>
    <property type="match status" value="1"/>
</dbReference>
<dbReference type="SUPFAM" id="SSF82919">
    <property type="entry name" value="Zn-finger domain of Sec23/24"/>
    <property type="match status" value="1"/>
</dbReference>
<reference key="1">
    <citation type="journal article" date="2008" name="PLoS Genet.">
        <title>Genomic islands in the pathogenic filamentous fungus Aspergillus fumigatus.</title>
        <authorList>
            <person name="Fedorova N.D."/>
            <person name="Khaldi N."/>
            <person name="Joardar V.S."/>
            <person name="Maiti R."/>
            <person name="Amedeo P."/>
            <person name="Anderson M.J."/>
            <person name="Crabtree J."/>
            <person name="Silva J.C."/>
            <person name="Badger J.H."/>
            <person name="Albarraq A."/>
            <person name="Angiuoli S."/>
            <person name="Bussey H."/>
            <person name="Bowyer P."/>
            <person name="Cotty P.J."/>
            <person name="Dyer P.S."/>
            <person name="Egan A."/>
            <person name="Galens K."/>
            <person name="Fraser-Liggett C.M."/>
            <person name="Haas B.J."/>
            <person name="Inman J.M."/>
            <person name="Kent R."/>
            <person name="Lemieux S."/>
            <person name="Malavazi I."/>
            <person name="Orvis J."/>
            <person name="Roemer T."/>
            <person name="Ronning C.M."/>
            <person name="Sundaram J.P."/>
            <person name="Sutton G."/>
            <person name="Turner G."/>
            <person name="Venter J.C."/>
            <person name="White O.R."/>
            <person name="Whitty B.R."/>
            <person name="Youngman P."/>
            <person name="Wolfe K.H."/>
            <person name="Goldman G.H."/>
            <person name="Wortman J.R."/>
            <person name="Jiang B."/>
            <person name="Denning D.W."/>
            <person name="Nierman W.C."/>
        </authorList>
    </citation>
    <scope>NUCLEOTIDE SEQUENCE [LARGE SCALE GENOMIC DNA]</scope>
    <source>
        <strain>ATCC 1007 / CBS 513.65 / DSM 816 / NCTC 3887 / NRRL 1 / QM 1276 / 107</strain>
    </source>
</reference>
<comment type="function">
    <text evidence="1">Component of the coat protein complex II (COPII) which promotes the formation of transport vesicles from the endoplasmic reticulum (ER). The coat has two main functions, the physical deformation of the endoplasmic reticulum membrane into vesicles and the selection of cargo molecules (By similarity).</text>
</comment>
<comment type="subunit">
    <text evidence="1">The COPII coat is composed of at least 5 proteins: the sec23/24 complex, the sec13/31 complex, and the protein sar1. Golgi apparatus membrane; Peripheral membrane protein; Cytoplasmic side.</text>
</comment>
<comment type="subcellular location">
    <subcellularLocation>
        <location evidence="1">Cytoplasm</location>
    </subcellularLocation>
    <subcellularLocation>
        <location evidence="1">Cytoplasmic vesicle</location>
        <location evidence="1">COPII-coated vesicle membrane</location>
        <topology evidence="1">Peripheral membrane protein</topology>
        <orientation evidence="1">Cytoplasmic side</orientation>
    </subcellularLocation>
    <subcellularLocation>
        <location evidence="1">Endoplasmic reticulum membrane</location>
        <topology evidence="1">Peripheral membrane protein</topology>
        <orientation evidence="1">Cytoplasmic side</orientation>
    </subcellularLocation>
    <subcellularLocation>
        <location evidence="1">Golgi apparatus membrane</location>
        <topology evidence="1">Peripheral membrane protein</topology>
        <orientation evidence="1">Cytoplasmic side</orientation>
    </subcellularLocation>
</comment>
<comment type="similarity">
    <text evidence="3">Belongs to the SEC23/SEC24 family. SEC24 subfamily.</text>
</comment>
<organism>
    <name type="scientific">Aspergillus clavatus (strain ATCC 1007 / CBS 513.65 / DSM 816 / NCTC 3887 / NRRL 1 / QM 1276 / 107)</name>
    <dbReference type="NCBI Taxonomy" id="344612"/>
    <lineage>
        <taxon>Eukaryota</taxon>
        <taxon>Fungi</taxon>
        <taxon>Dikarya</taxon>
        <taxon>Ascomycota</taxon>
        <taxon>Pezizomycotina</taxon>
        <taxon>Eurotiomycetes</taxon>
        <taxon>Eurotiomycetidae</taxon>
        <taxon>Eurotiales</taxon>
        <taxon>Aspergillaceae</taxon>
        <taxon>Aspergillus</taxon>
        <taxon>Aspergillus subgen. Fumigati</taxon>
    </lineage>
</organism>
<protein>
    <recommendedName>
        <fullName>Protein transport protein sec24</fullName>
    </recommendedName>
</protein>
<name>SEC24_ASPCL</name>
<feature type="chain" id="PRO_0000295476" description="Protein transport protein sec24">
    <location>
        <begin position="1"/>
        <end position="919"/>
    </location>
</feature>
<feature type="region of interest" description="Disordered" evidence="2">
    <location>
        <begin position="1"/>
        <end position="45"/>
    </location>
</feature>
<feature type="region of interest" description="Zinc finger-like">
    <location>
        <begin position="244"/>
        <end position="269"/>
    </location>
</feature>
<feature type="compositionally biased region" description="Low complexity" evidence="2">
    <location>
        <begin position="1"/>
        <end position="38"/>
    </location>
</feature>
<feature type="binding site" evidence="1">
    <location>
        <position position="244"/>
    </location>
    <ligand>
        <name>Zn(2+)</name>
        <dbReference type="ChEBI" id="CHEBI:29105"/>
    </ligand>
</feature>
<feature type="binding site" evidence="1">
    <location>
        <position position="247"/>
    </location>
    <ligand>
        <name>Zn(2+)</name>
        <dbReference type="ChEBI" id="CHEBI:29105"/>
    </ligand>
</feature>
<feature type="binding site" evidence="1">
    <location>
        <position position="266"/>
    </location>
    <ligand>
        <name>Zn(2+)</name>
        <dbReference type="ChEBI" id="CHEBI:29105"/>
    </ligand>
</feature>
<feature type="binding site" evidence="1">
    <location>
        <position position="269"/>
    </location>
    <ligand>
        <name>Zn(2+)</name>
        <dbReference type="ChEBI" id="CHEBI:29105"/>
    </ligand>
</feature>